<gene>
    <name type="primary">R3HDM1</name>
    <name type="synonym">KIAA0029</name>
    <name type="synonym">R3HDM</name>
</gene>
<reference key="1">
    <citation type="journal article" date="1994" name="DNA Res.">
        <title>Prediction of the coding sequences of unidentified human genes. I. The coding sequences of 40 new genes (KIAA0001-KIAA0040) deduced by analysis of randomly sampled cDNA clones from human immature myeloid cell line KG-1.</title>
        <authorList>
            <person name="Nomura N."/>
            <person name="Miyajima N."/>
            <person name="Sazuka T."/>
            <person name="Tanaka A."/>
            <person name="Kawarabayasi Y."/>
            <person name="Sato S."/>
            <person name="Nagase T."/>
            <person name="Seki N."/>
            <person name="Ishikawa K."/>
            <person name="Tabata S."/>
        </authorList>
    </citation>
    <scope>NUCLEOTIDE SEQUENCE [LARGE SCALE MRNA] (ISOFORM 2)</scope>
    <source>
        <tissue>Bone marrow</tissue>
    </source>
</reference>
<reference key="2">
    <citation type="journal article" date="2004" name="Nat. Genet.">
        <title>Complete sequencing and characterization of 21,243 full-length human cDNAs.</title>
        <authorList>
            <person name="Ota T."/>
            <person name="Suzuki Y."/>
            <person name="Nishikawa T."/>
            <person name="Otsuki T."/>
            <person name="Sugiyama T."/>
            <person name="Irie R."/>
            <person name="Wakamatsu A."/>
            <person name="Hayashi K."/>
            <person name="Sato H."/>
            <person name="Nagai K."/>
            <person name="Kimura K."/>
            <person name="Makita H."/>
            <person name="Sekine M."/>
            <person name="Obayashi M."/>
            <person name="Nishi T."/>
            <person name="Shibahara T."/>
            <person name="Tanaka T."/>
            <person name="Ishii S."/>
            <person name="Yamamoto J."/>
            <person name="Saito K."/>
            <person name="Kawai Y."/>
            <person name="Isono Y."/>
            <person name="Nakamura Y."/>
            <person name="Nagahari K."/>
            <person name="Murakami K."/>
            <person name="Yasuda T."/>
            <person name="Iwayanagi T."/>
            <person name="Wagatsuma M."/>
            <person name="Shiratori A."/>
            <person name="Sudo H."/>
            <person name="Hosoiri T."/>
            <person name="Kaku Y."/>
            <person name="Kodaira H."/>
            <person name="Kondo H."/>
            <person name="Sugawara M."/>
            <person name="Takahashi M."/>
            <person name="Kanda K."/>
            <person name="Yokoi T."/>
            <person name="Furuya T."/>
            <person name="Kikkawa E."/>
            <person name="Omura Y."/>
            <person name="Abe K."/>
            <person name="Kamihara K."/>
            <person name="Katsuta N."/>
            <person name="Sato K."/>
            <person name="Tanikawa M."/>
            <person name="Yamazaki M."/>
            <person name="Ninomiya K."/>
            <person name="Ishibashi T."/>
            <person name="Yamashita H."/>
            <person name="Murakawa K."/>
            <person name="Fujimori K."/>
            <person name="Tanai H."/>
            <person name="Kimata M."/>
            <person name="Watanabe M."/>
            <person name="Hiraoka S."/>
            <person name="Chiba Y."/>
            <person name="Ishida S."/>
            <person name="Ono Y."/>
            <person name="Takiguchi S."/>
            <person name="Watanabe S."/>
            <person name="Yosida M."/>
            <person name="Hotuta T."/>
            <person name="Kusano J."/>
            <person name="Kanehori K."/>
            <person name="Takahashi-Fujii A."/>
            <person name="Hara H."/>
            <person name="Tanase T.-O."/>
            <person name="Nomura Y."/>
            <person name="Togiya S."/>
            <person name="Komai F."/>
            <person name="Hara R."/>
            <person name="Takeuchi K."/>
            <person name="Arita M."/>
            <person name="Imose N."/>
            <person name="Musashino K."/>
            <person name="Yuuki H."/>
            <person name="Oshima A."/>
            <person name="Sasaki N."/>
            <person name="Aotsuka S."/>
            <person name="Yoshikawa Y."/>
            <person name="Matsunawa H."/>
            <person name="Ichihara T."/>
            <person name="Shiohata N."/>
            <person name="Sano S."/>
            <person name="Moriya S."/>
            <person name="Momiyama H."/>
            <person name="Satoh N."/>
            <person name="Takami S."/>
            <person name="Terashima Y."/>
            <person name="Suzuki O."/>
            <person name="Nakagawa S."/>
            <person name="Senoh A."/>
            <person name="Mizoguchi H."/>
            <person name="Goto Y."/>
            <person name="Shimizu F."/>
            <person name="Wakebe H."/>
            <person name="Hishigaki H."/>
            <person name="Watanabe T."/>
            <person name="Sugiyama A."/>
            <person name="Takemoto M."/>
            <person name="Kawakami B."/>
            <person name="Yamazaki M."/>
            <person name="Watanabe K."/>
            <person name="Kumagai A."/>
            <person name="Itakura S."/>
            <person name="Fukuzumi Y."/>
            <person name="Fujimori Y."/>
            <person name="Komiyama M."/>
            <person name="Tashiro H."/>
            <person name="Tanigami A."/>
            <person name="Fujiwara T."/>
            <person name="Ono T."/>
            <person name="Yamada K."/>
            <person name="Fujii Y."/>
            <person name="Ozaki K."/>
            <person name="Hirao M."/>
            <person name="Ohmori Y."/>
            <person name="Kawabata A."/>
            <person name="Hikiji T."/>
            <person name="Kobatake N."/>
            <person name="Inagaki H."/>
            <person name="Ikema Y."/>
            <person name="Okamoto S."/>
            <person name="Okitani R."/>
            <person name="Kawakami T."/>
            <person name="Noguchi S."/>
            <person name="Itoh T."/>
            <person name="Shigeta K."/>
            <person name="Senba T."/>
            <person name="Matsumura K."/>
            <person name="Nakajima Y."/>
            <person name="Mizuno T."/>
            <person name="Morinaga M."/>
            <person name="Sasaki M."/>
            <person name="Togashi T."/>
            <person name="Oyama M."/>
            <person name="Hata H."/>
            <person name="Watanabe M."/>
            <person name="Komatsu T."/>
            <person name="Mizushima-Sugano J."/>
            <person name="Satoh T."/>
            <person name="Shirai Y."/>
            <person name="Takahashi Y."/>
            <person name="Nakagawa K."/>
            <person name="Okumura K."/>
            <person name="Nagase T."/>
            <person name="Nomura N."/>
            <person name="Kikuchi H."/>
            <person name="Masuho Y."/>
            <person name="Yamashita R."/>
            <person name="Nakai K."/>
            <person name="Yada T."/>
            <person name="Nakamura Y."/>
            <person name="Ohara O."/>
            <person name="Isogai T."/>
            <person name="Sugano S."/>
        </authorList>
    </citation>
    <scope>NUCLEOTIDE SEQUENCE [LARGE SCALE MRNA] (ISOFORMS 3 AND 4)</scope>
    <scope>VARIANT PRO-632</scope>
    <source>
        <tissue>Brain</tissue>
        <tissue>Hippocampus</tissue>
    </source>
</reference>
<reference key="3">
    <citation type="journal article" date="2005" name="Nature">
        <title>Generation and annotation of the DNA sequences of human chromosomes 2 and 4.</title>
        <authorList>
            <person name="Hillier L.W."/>
            <person name="Graves T.A."/>
            <person name="Fulton R.S."/>
            <person name="Fulton L.A."/>
            <person name="Pepin K.H."/>
            <person name="Minx P."/>
            <person name="Wagner-McPherson C."/>
            <person name="Layman D."/>
            <person name="Wylie K."/>
            <person name="Sekhon M."/>
            <person name="Becker M.C."/>
            <person name="Fewell G.A."/>
            <person name="Delehaunty K.D."/>
            <person name="Miner T.L."/>
            <person name="Nash W.E."/>
            <person name="Kremitzki C."/>
            <person name="Oddy L."/>
            <person name="Du H."/>
            <person name="Sun H."/>
            <person name="Bradshaw-Cordum H."/>
            <person name="Ali J."/>
            <person name="Carter J."/>
            <person name="Cordes M."/>
            <person name="Harris A."/>
            <person name="Isak A."/>
            <person name="van Brunt A."/>
            <person name="Nguyen C."/>
            <person name="Du F."/>
            <person name="Courtney L."/>
            <person name="Kalicki J."/>
            <person name="Ozersky P."/>
            <person name="Abbott S."/>
            <person name="Armstrong J."/>
            <person name="Belter E.A."/>
            <person name="Caruso L."/>
            <person name="Cedroni M."/>
            <person name="Cotton M."/>
            <person name="Davidson T."/>
            <person name="Desai A."/>
            <person name="Elliott G."/>
            <person name="Erb T."/>
            <person name="Fronick C."/>
            <person name="Gaige T."/>
            <person name="Haakenson W."/>
            <person name="Haglund K."/>
            <person name="Holmes A."/>
            <person name="Harkins R."/>
            <person name="Kim K."/>
            <person name="Kruchowski S.S."/>
            <person name="Strong C.M."/>
            <person name="Grewal N."/>
            <person name="Goyea E."/>
            <person name="Hou S."/>
            <person name="Levy A."/>
            <person name="Martinka S."/>
            <person name="Mead K."/>
            <person name="McLellan M.D."/>
            <person name="Meyer R."/>
            <person name="Randall-Maher J."/>
            <person name="Tomlinson C."/>
            <person name="Dauphin-Kohlberg S."/>
            <person name="Kozlowicz-Reilly A."/>
            <person name="Shah N."/>
            <person name="Swearengen-Shahid S."/>
            <person name="Snider J."/>
            <person name="Strong J.T."/>
            <person name="Thompson J."/>
            <person name="Yoakum M."/>
            <person name="Leonard S."/>
            <person name="Pearman C."/>
            <person name="Trani L."/>
            <person name="Radionenko M."/>
            <person name="Waligorski J.E."/>
            <person name="Wang C."/>
            <person name="Rock S.M."/>
            <person name="Tin-Wollam A.-M."/>
            <person name="Maupin R."/>
            <person name="Latreille P."/>
            <person name="Wendl M.C."/>
            <person name="Yang S.-P."/>
            <person name="Pohl C."/>
            <person name="Wallis J.W."/>
            <person name="Spieth J."/>
            <person name="Bieri T.A."/>
            <person name="Berkowicz N."/>
            <person name="Nelson J.O."/>
            <person name="Osborne J."/>
            <person name="Ding L."/>
            <person name="Meyer R."/>
            <person name="Sabo A."/>
            <person name="Shotland Y."/>
            <person name="Sinha P."/>
            <person name="Wohldmann P.E."/>
            <person name="Cook L.L."/>
            <person name="Hickenbotham M.T."/>
            <person name="Eldred J."/>
            <person name="Williams D."/>
            <person name="Jones T.A."/>
            <person name="She X."/>
            <person name="Ciccarelli F.D."/>
            <person name="Izaurralde E."/>
            <person name="Taylor J."/>
            <person name="Schmutz J."/>
            <person name="Myers R.M."/>
            <person name="Cox D.R."/>
            <person name="Huang X."/>
            <person name="McPherson J.D."/>
            <person name="Mardis E.R."/>
            <person name="Clifton S.W."/>
            <person name="Warren W.C."/>
            <person name="Chinwalla A.T."/>
            <person name="Eddy S.R."/>
            <person name="Marra M.A."/>
            <person name="Ovcharenko I."/>
            <person name="Furey T.S."/>
            <person name="Miller W."/>
            <person name="Eichler E.E."/>
            <person name="Bork P."/>
            <person name="Suyama M."/>
            <person name="Torrents D."/>
            <person name="Waterston R.H."/>
            <person name="Wilson R.K."/>
        </authorList>
    </citation>
    <scope>NUCLEOTIDE SEQUENCE [LARGE SCALE GENOMIC DNA]</scope>
</reference>
<reference key="4">
    <citation type="submission" date="2005-09" db="EMBL/GenBank/DDBJ databases">
        <authorList>
            <person name="Mural R.J."/>
            <person name="Istrail S."/>
            <person name="Sutton G.G."/>
            <person name="Florea L."/>
            <person name="Halpern A.L."/>
            <person name="Mobarry C.M."/>
            <person name="Lippert R."/>
            <person name="Walenz B."/>
            <person name="Shatkay H."/>
            <person name="Dew I."/>
            <person name="Miller J.R."/>
            <person name="Flanigan M.J."/>
            <person name="Edwards N.J."/>
            <person name="Bolanos R."/>
            <person name="Fasulo D."/>
            <person name="Halldorsson B.V."/>
            <person name="Hannenhalli S."/>
            <person name="Turner R."/>
            <person name="Yooseph S."/>
            <person name="Lu F."/>
            <person name="Nusskern D.R."/>
            <person name="Shue B.C."/>
            <person name="Zheng X.H."/>
            <person name="Zhong F."/>
            <person name="Delcher A.L."/>
            <person name="Huson D.H."/>
            <person name="Kravitz S.A."/>
            <person name="Mouchard L."/>
            <person name="Reinert K."/>
            <person name="Remington K.A."/>
            <person name="Clark A.G."/>
            <person name="Waterman M.S."/>
            <person name="Eichler E.E."/>
            <person name="Adams M.D."/>
            <person name="Hunkapiller M.W."/>
            <person name="Myers E.W."/>
            <person name="Venter J.C."/>
        </authorList>
    </citation>
    <scope>NUCLEOTIDE SEQUENCE [LARGE SCALE GENOMIC DNA]</scope>
</reference>
<reference key="5">
    <citation type="journal article" date="2004" name="Genome Res.">
        <title>The status, quality, and expansion of the NIH full-length cDNA project: the Mammalian Gene Collection (MGC).</title>
        <authorList>
            <consortium name="The MGC Project Team"/>
        </authorList>
    </citation>
    <scope>NUCLEOTIDE SEQUENCE [LARGE SCALE MRNA] (ISOFORM 3)</scope>
    <scope>VARIANT VAL-270</scope>
    <source>
        <tissue>Uterus</tissue>
    </source>
</reference>
<reference key="6">
    <citation type="journal article" date="2004" name="Anal. Chem.">
        <title>Robust phosphoproteomic profiling of tyrosine phosphorylation sites from human T cells using immobilized metal affinity chromatography and tandem mass spectrometry.</title>
        <authorList>
            <person name="Brill L.M."/>
            <person name="Salomon A.R."/>
            <person name="Ficarro S.B."/>
            <person name="Mukherji M."/>
            <person name="Stettler-Gill M."/>
            <person name="Peters E.C."/>
        </authorList>
    </citation>
    <scope>IDENTIFICATION BY MASS SPECTROMETRY [LARGE SCALE ANALYSIS]</scope>
    <source>
        <tissue>Leukemic T-cell</tissue>
    </source>
</reference>
<reference key="7">
    <citation type="journal article" date="2008" name="Proc. Natl. Acad. Sci. U.S.A.">
        <title>A quantitative atlas of mitotic phosphorylation.</title>
        <authorList>
            <person name="Dephoure N."/>
            <person name="Zhou C."/>
            <person name="Villen J."/>
            <person name="Beausoleil S.A."/>
            <person name="Bakalarski C.E."/>
            <person name="Elledge S.J."/>
            <person name="Gygi S.P."/>
        </authorList>
    </citation>
    <scope>IDENTIFICATION BY MASS SPECTROMETRY [LARGE SCALE ANALYSIS]</scope>
    <source>
        <tissue>Cervix carcinoma</tissue>
    </source>
</reference>
<reference key="8">
    <citation type="journal article" date="2009" name="Sci. Signal.">
        <title>Quantitative phosphoproteomic analysis of T cell receptor signaling reveals system-wide modulation of protein-protein interactions.</title>
        <authorList>
            <person name="Mayya V."/>
            <person name="Lundgren D.H."/>
            <person name="Hwang S.-I."/>
            <person name="Rezaul K."/>
            <person name="Wu L."/>
            <person name="Eng J.K."/>
            <person name="Rodionov V."/>
            <person name="Han D.K."/>
        </authorList>
    </citation>
    <scope>PHOSPHORYLATION [LARGE SCALE ANALYSIS] AT SER-973</scope>
    <scope>IDENTIFICATION BY MASS SPECTROMETRY [LARGE SCALE ANALYSIS]</scope>
    <source>
        <tissue>Leukemic T-cell</tissue>
    </source>
</reference>
<reference key="9">
    <citation type="journal article" date="2010" name="Sci. Signal.">
        <title>Quantitative phosphoproteomics reveals widespread full phosphorylation site occupancy during mitosis.</title>
        <authorList>
            <person name="Olsen J.V."/>
            <person name="Vermeulen M."/>
            <person name="Santamaria A."/>
            <person name="Kumar C."/>
            <person name="Miller M.L."/>
            <person name="Jensen L.J."/>
            <person name="Gnad F."/>
            <person name="Cox J."/>
            <person name="Jensen T.S."/>
            <person name="Nigg E.A."/>
            <person name="Brunak S."/>
            <person name="Mann M."/>
        </authorList>
    </citation>
    <scope>PHOSPHORYLATION [LARGE SCALE ANALYSIS] AT SER-187 AND SER-381</scope>
    <scope>IDENTIFICATION BY MASS SPECTROMETRY [LARGE SCALE ANALYSIS]</scope>
    <source>
        <tissue>Cervix carcinoma</tissue>
    </source>
</reference>
<reference key="10">
    <citation type="journal article" date="2011" name="Sci. Signal.">
        <title>System-wide temporal characterization of the proteome and phosphoproteome of human embryonic stem cell differentiation.</title>
        <authorList>
            <person name="Rigbolt K.T."/>
            <person name="Prokhorova T.A."/>
            <person name="Akimov V."/>
            <person name="Henningsen J."/>
            <person name="Johansen P.T."/>
            <person name="Kratchmarova I."/>
            <person name="Kassem M."/>
            <person name="Mann M."/>
            <person name="Olsen J.V."/>
            <person name="Blagoev B."/>
        </authorList>
    </citation>
    <scope>PHOSPHORYLATION [LARGE SCALE ANALYSIS] AT SER-380</scope>
    <scope>IDENTIFICATION BY MASS SPECTROMETRY [LARGE SCALE ANALYSIS]</scope>
</reference>
<reference key="11">
    <citation type="journal article" date="2013" name="J. Proteome Res.">
        <title>Toward a comprehensive characterization of a human cancer cell phosphoproteome.</title>
        <authorList>
            <person name="Zhou H."/>
            <person name="Di Palma S."/>
            <person name="Preisinger C."/>
            <person name="Peng M."/>
            <person name="Polat A.N."/>
            <person name="Heck A.J."/>
            <person name="Mohammed S."/>
        </authorList>
    </citation>
    <scope>PHOSPHORYLATION [LARGE SCALE ANALYSIS] AT SER-187; SER-262; SER-302; SER-381; SER-393 AND SER-973</scope>
    <scope>IDENTIFICATION BY MASS SPECTROMETRY [LARGE SCALE ANALYSIS]</scope>
    <source>
        <tissue>Cervix carcinoma</tissue>
        <tissue>Erythroleukemia</tissue>
    </source>
</reference>
<reference key="12">
    <citation type="journal article" date="2014" name="Mol. Cell. Proteomics">
        <title>Immunoaffinity enrichment and mass spectrometry analysis of protein methylation.</title>
        <authorList>
            <person name="Guo A."/>
            <person name="Gu H."/>
            <person name="Zhou J."/>
            <person name="Mulhern D."/>
            <person name="Wang Y."/>
            <person name="Lee K.A."/>
            <person name="Yang V."/>
            <person name="Aguiar M."/>
            <person name="Kornhauser J."/>
            <person name="Jia X."/>
            <person name="Ren J."/>
            <person name="Beausoleil S.A."/>
            <person name="Silva J.C."/>
            <person name="Vemulapalli V."/>
            <person name="Bedford M.T."/>
            <person name="Comb M.J."/>
        </authorList>
    </citation>
    <scope>METHYLATION [LARGE SCALE ANALYSIS] AT ARG-929</scope>
    <scope>IDENTIFICATION BY MASS SPECTROMETRY [LARGE SCALE ANALYSIS]</scope>
    <source>
        <tissue>Colon carcinoma</tissue>
    </source>
</reference>
<proteinExistence type="evidence at protein level"/>
<keyword id="KW-0025">Alternative splicing</keyword>
<keyword id="KW-0488">Methylation</keyword>
<keyword id="KW-0597">Phosphoprotein</keyword>
<keyword id="KW-1267">Proteomics identification</keyword>
<keyword id="KW-1185">Reference proteome</keyword>
<accession>Q15032</accession>
<accession>A8K1V0</accession>
<accession>B3KXQ9</accession>
<accession>E9PBB4</accession>
<accession>E9PG42</accession>
<accession>G5E9G8</accession>
<accession>Q8IW32</accession>
<name>R3HD1_HUMAN</name>
<organism>
    <name type="scientific">Homo sapiens</name>
    <name type="common">Human</name>
    <dbReference type="NCBI Taxonomy" id="9606"/>
    <lineage>
        <taxon>Eukaryota</taxon>
        <taxon>Metazoa</taxon>
        <taxon>Chordata</taxon>
        <taxon>Craniata</taxon>
        <taxon>Vertebrata</taxon>
        <taxon>Euteleostomi</taxon>
        <taxon>Mammalia</taxon>
        <taxon>Eutheria</taxon>
        <taxon>Euarchontoglires</taxon>
        <taxon>Primates</taxon>
        <taxon>Haplorrhini</taxon>
        <taxon>Catarrhini</taxon>
        <taxon>Hominidae</taxon>
        <taxon>Homo</taxon>
    </lineage>
</organism>
<feature type="chain" id="PRO_0000097139" description="R3H domain-containing protein 1">
    <location>
        <begin position="1"/>
        <end position="1099"/>
    </location>
</feature>
<feature type="domain" description="R3H" evidence="1">
    <location>
        <begin position="168"/>
        <end position="231"/>
    </location>
</feature>
<feature type="domain" description="SUZ" evidence="2">
    <location>
        <begin position="232"/>
        <end position="302"/>
    </location>
</feature>
<feature type="region of interest" description="Disordered" evidence="3">
    <location>
        <begin position="111"/>
        <end position="146"/>
    </location>
</feature>
<feature type="region of interest" description="Disordered" evidence="3">
    <location>
        <begin position="267"/>
        <end position="287"/>
    </location>
</feature>
<feature type="region of interest" description="Disordered" evidence="3">
    <location>
        <begin position="331"/>
        <end position="370"/>
    </location>
</feature>
<feature type="region of interest" description="Disordered" evidence="3">
    <location>
        <begin position="387"/>
        <end position="439"/>
    </location>
</feature>
<feature type="region of interest" description="Disordered" evidence="3">
    <location>
        <begin position="490"/>
        <end position="537"/>
    </location>
</feature>
<feature type="region of interest" description="Disordered" evidence="3">
    <location>
        <begin position="583"/>
        <end position="625"/>
    </location>
</feature>
<feature type="region of interest" description="Disordered" evidence="3">
    <location>
        <begin position="797"/>
        <end position="825"/>
    </location>
</feature>
<feature type="region of interest" description="Disordered" evidence="3">
    <location>
        <begin position="941"/>
        <end position="977"/>
    </location>
</feature>
<feature type="compositionally biased region" description="Basic and acidic residues" evidence="3">
    <location>
        <begin position="112"/>
        <end position="142"/>
    </location>
</feature>
<feature type="compositionally biased region" description="Polar residues" evidence="3">
    <location>
        <begin position="338"/>
        <end position="349"/>
    </location>
</feature>
<feature type="compositionally biased region" description="Polar residues" evidence="3">
    <location>
        <begin position="360"/>
        <end position="370"/>
    </location>
</feature>
<feature type="compositionally biased region" description="Low complexity" evidence="3">
    <location>
        <begin position="391"/>
        <end position="422"/>
    </location>
</feature>
<feature type="compositionally biased region" description="Pro residues" evidence="3">
    <location>
        <begin position="519"/>
        <end position="532"/>
    </location>
</feature>
<feature type="compositionally biased region" description="Pro residues" evidence="3">
    <location>
        <begin position="588"/>
        <end position="611"/>
    </location>
</feature>
<feature type="compositionally biased region" description="Polar residues" evidence="3">
    <location>
        <begin position="797"/>
        <end position="817"/>
    </location>
</feature>
<feature type="compositionally biased region" description="Basic residues" evidence="3">
    <location>
        <begin position="960"/>
        <end position="969"/>
    </location>
</feature>
<feature type="modified residue" description="Phosphoserine" evidence="11 13">
    <location>
        <position position="187"/>
    </location>
</feature>
<feature type="modified residue" description="Phosphoserine" evidence="13">
    <location>
        <position position="262"/>
    </location>
</feature>
<feature type="modified residue" description="Phosphoserine" evidence="13">
    <location>
        <position position="302"/>
    </location>
</feature>
<feature type="modified residue" description="Phosphoserine" evidence="12">
    <location>
        <position position="380"/>
    </location>
</feature>
<feature type="modified residue" description="Phosphoserine" evidence="11 13">
    <location>
        <position position="381"/>
    </location>
</feature>
<feature type="modified residue" description="Phosphoserine" evidence="13">
    <location>
        <position position="393"/>
    </location>
</feature>
<feature type="modified residue" description="Asymmetric dimethylarginine; alternate" evidence="14">
    <location>
        <position position="929"/>
    </location>
</feature>
<feature type="modified residue" description="Omega-N-methylarginine; alternate" evidence="14">
    <location>
        <position position="929"/>
    </location>
</feature>
<feature type="modified residue" description="Phosphoserine" evidence="10 13">
    <location>
        <position position="973"/>
    </location>
</feature>
<feature type="splice variant" id="VSP_054308" description="In isoform 4." evidence="6">
    <original>MRMSDTVTVKDETATMKDLEAEVKDTTRVENLIKSENYGKILVE</original>
    <variation>MGLLLPDYRWFTTVDILADNCEKEPWIILFYFCGTPQSQIQRTH</variation>
    <location>
        <begin position="1"/>
        <end position="44"/>
    </location>
</feature>
<feature type="splice variant" id="VSP_054309" description="In isoform 4." evidence="6">
    <location>
        <begin position="45"/>
        <end position="100"/>
    </location>
</feature>
<feature type="splice variant" id="VSP_017344" description="In isoform 2." evidence="8">
    <location>
        <begin position="57"/>
        <end position="100"/>
    </location>
</feature>
<feature type="splice variant" id="VSP_017345" description="In isoform 2." evidence="8">
    <location>
        <begin position="406"/>
        <end position="490"/>
    </location>
</feature>
<feature type="splice variant" id="VSP_054310" description="In isoform 2, isoform 3 and isoform 4." evidence="6 7 8">
    <original>Q</original>
    <variation>QQ</variation>
    <location>
        <position position="541"/>
    </location>
</feature>
<feature type="sequence variant" id="VAR_025423" description="In dbSNP:rs961360." evidence="5">
    <original>M</original>
    <variation>V</variation>
    <location>
        <position position="270"/>
    </location>
</feature>
<feature type="sequence variant" id="VAR_025424" description="In dbSNP:rs2305165." evidence="4">
    <original>Q</original>
    <variation>P</variation>
    <location>
        <position position="632"/>
    </location>
</feature>
<feature type="sequence conflict" description="In Ref. 2; BAF82704." evidence="9" ref="2">
    <original>K</original>
    <variation>E</variation>
    <location>
        <position position="125"/>
    </location>
</feature>
<feature type="sequence conflict" description="In Ref. 2; BAF82704." evidence="9" ref="2">
    <original>K</original>
    <variation>R</variation>
    <location>
        <position position="902"/>
    </location>
</feature>
<feature type="sequence conflict" description="In Ref. 2; BAF82704." evidence="9" ref="2">
    <original>S</original>
    <variation>L</variation>
    <location>
        <position position="1075"/>
    </location>
</feature>
<dbReference type="EMBL" id="D21852">
    <property type="protein sequence ID" value="BAA04878.2"/>
    <property type="status" value="ALT_INIT"/>
    <property type="molecule type" value="mRNA"/>
</dbReference>
<dbReference type="EMBL" id="AK127793">
    <property type="protein sequence ID" value="BAG54571.1"/>
    <property type="molecule type" value="mRNA"/>
</dbReference>
<dbReference type="EMBL" id="AK290015">
    <property type="protein sequence ID" value="BAF82704.1"/>
    <property type="molecule type" value="mRNA"/>
</dbReference>
<dbReference type="EMBL" id="AC011893">
    <property type="status" value="NOT_ANNOTATED_CDS"/>
    <property type="molecule type" value="Genomic_DNA"/>
</dbReference>
<dbReference type="EMBL" id="AC016742">
    <property type="status" value="NOT_ANNOTATED_CDS"/>
    <property type="molecule type" value="Genomic_DNA"/>
</dbReference>
<dbReference type="EMBL" id="CH471058">
    <property type="protein sequence ID" value="EAX11627.1"/>
    <property type="molecule type" value="Genomic_DNA"/>
</dbReference>
<dbReference type="EMBL" id="BC041093">
    <property type="protein sequence ID" value="AAH41093.1"/>
    <property type="molecule type" value="mRNA"/>
</dbReference>
<dbReference type="CCDS" id="CCDS2177.1">
    <molecule id="Q15032-1"/>
</dbReference>
<dbReference type="CCDS" id="CCDS63024.1">
    <molecule id="Q15032-4"/>
</dbReference>
<dbReference type="CCDS" id="CCDS63025.1">
    <molecule id="Q15032-3"/>
</dbReference>
<dbReference type="CCDS" id="CCDS63026.1">
    <molecule id="Q15032-2"/>
</dbReference>
<dbReference type="RefSeq" id="NP_001269727.1">
    <molecule id="Q15032-3"/>
    <property type="nucleotide sequence ID" value="NM_001282798.2"/>
</dbReference>
<dbReference type="RefSeq" id="NP_001269728.1">
    <molecule id="Q15032-2"/>
    <property type="nucleotide sequence ID" value="NM_001282799.2"/>
</dbReference>
<dbReference type="RefSeq" id="NP_001269729.1">
    <molecule id="Q15032-4"/>
    <property type="nucleotide sequence ID" value="NM_001282800.2"/>
</dbReference>
<dbReference type="RefSeq" id="NP_001341128.1">
    <molecule id="Q15032-1"/>
    <property type="nucleotide sequence ID" value="NM_001354199.2"/>
</dbReference>
<dbReference type="RefSeq" id="NP_001341129.1">
    <molecule id="Q15032-3"/>
    <property type="nucleotide sequence ID" value="NM_001354200.2"/>
</dbReference>
<dbReference type="RefSeq" id="NP_056176.2">
    <molecule id="Q15032-1"/>
    <property type="nucleotide sequence ID" value="NM_015361.3"/>
</dbReference>
<dbReference type="RefSeq" id="XP_006712452.1">
    <property type="nucleotide sequence ID" value="XM_006712389.2"/>
</dbReference>
<dbReference type="RefSeq" id="XP_016859207.1">
    <property type="nucleotide sequence ID" value="XM_017003718.1"/>
</dbReference>
<dbReference type="SMR" id="Q15032"/>
<dbReference type="BioGRID" id="117065">
    <property type="interactions" value="94"/>
</dbReference>
<dbReference type="FunCoup" id="Q15032">
    <property type="interactions" value="1583"/>
</dbReference>
<dbReference type="IntAct" id="Q15032">
    <property type="interactions" value="31"/>
</dbReference>
<dbReference type="MINT" id="Q15032"/>
<dbReference type="STRING" id="9606.ENSP00000387010"/>
<dbReference type="GlyCosmos" id="Q15032">
    <property type="glycosylation" value="1 site, 2 glycans"/>
</dbReference>
<dbReference type="GlyGen" id="Q15032">
    <property type="glycosylation" value="7 sites, 2 O-linked glycans (5 sites)"/>
</dbReference>
<dbReference type="iPTMnet" id="Q15032"/>
<dbReference type="PhosphoSitePlus" id="Q15032"/>
<dbReference type="BioMuta" id="R3HDM1"/>
<dbReference type="DMDM" id="92086999"/>
<dbReference type="jPOST" id="Q15032"/>
<dbReference type="MassIVE" id="Q15032"/>
<dbReference type="PaxDb" id="9606-ENSP00000387010"/>
<dbReference type="PeptideAtlas" id="Q15032"/>
<dbReference type="ProteomicsDB" id="19186"/>
<dbReference type="ProteomicsDB" id="20240"/>
<dbReference type="ProteomicsDB" id="33934"/>
<dbReference type="ProteomicsDB" id="60381">
    <molecule id="Q15032-1"/>
</dbReference>
<dbReference type="ProteomicsDB" id="60382">
    <molecule id="Q15032-2"/>
</dbReference>
<dbReference type="Pumba" id="Q15032"/>
<dbReference type="Antibodypedia" id="51003">
    <property type="antibodies" value="14 antibodies from 9 providers"/>
</dbReference>
<dbReference type="DNASU" id="23518"/>
<dbReference type="Ensembl" id="ENST00000264160.8">
    <molecule id="Q15032-1"/>
    <property type="protein sequence ID" value="ENSP00000264160.4"/>
    <property type="gene ID" value="ENSG00000048991.18"/>
</dbReference>
<dbReference type="Ensembl" id="ENST00000409478.5">
    <molecule id="Q15032-2"/>
    <property type="protein sequence ID" value="ENSP00000386457.1"/>
    <property type="gene ID" value="ENSG00000048991.18"/>
</dbReference>
<dbReference type="Ensembl" id="ENST00000409606.5">
    <molecule id="Q15032-3"/>
    <property type="protein sequence ID" value="ENSP00000387010.1"/>
    <property type="gene ID" value="ENSG00000048991.18"/>
</dbReference>
<dbReference type="Ensembl" id="ENST00000410054.5">
    <molecule id="Q15032-4"/>
    <property type="protein sequence ID" value="ENSP00000386877.1"/>
    <property type="gene ID" value="ENSG00000048991.18"/>
</dbReference>
<dbReference type="Ensembl" id="ENST00000628915.2">
    <molecule id="Q15032-2"/>
    <property type="protein sequence ID" value="ENSP00000486837.1"/>
    <property type="gene ID" value="ENSG00000048991.18"/>
</dbReference>
<dbReference type="GeneID" id="23518"/>
<dbReference type="KEGG" id="hsa:23518"/>
<dbReference type="UCSC" id="uc002tuo.5">
    <molecule id="Q15032-1"/>
    <property type="organism name" value="human"/>
</dbReference>
<dbReference type="AGR" id="HGNC:9757"/>
<dbReference type="CTD" id="23518"/>
<dbReference type="DisGeNET" id="23518"/>
<dbReference type="GeneCards" id="R3HDM1"/>
<dbReference type="HGNC" id="HGNC:9757">
    <property type="gene designation" value="R3HDM1"/>
</dbReference>
<dbReference type="HPA" id="ENSG00000048991">
    <property type="expression patterns" value="Tissue enhanced (brain)"/>
</dbReference>
<dbReference type="MIM" id="619474">
    <property type="type" value="gene"/>
</dbReference>
<dbReference type="neXtProt" id="NX_Q15032"/>
<dbReference type="OpenTargets" id="ENSG00000048991"/>
<dbReference type="PharmGKB" id="PA34098"/>
<dbReference type="VEuPathDB" id="HostDB:ENSG00000048991"/>
<dbReference type="eggNOG" id="KOG2953">
    <property type="taxonomic scope" value="Eukaryota"/>
</dbReference>
<dbReference type="GeneTree" id="ENSGT00940000156095"/>
<dbReference type="HOGENOM" id="CLU_007817_0_0_1"/>
<dbReference type="InParanoid" id="Q15032"/>
<dbReference type="OMA" id="QPVQCST"/>
<dbReference type="OrthoDB" id="278430at2759"/>
<dbReference type="PAN-GO" id="Q15032">
    <property type="GO annotations" value="0 GO annotations based on evolutionary models"/>
</dbReference>
<dbReference type="PhylomeDB" id="Q15032"/>
<dbReference type="TreeFam" id="TF315915"/>
<dbReference type="PathwayCommons" id="Q15032"/>
<dbReference type="SignaLink" id="Q15032"/>
<dbReference type="BioGRID-ORCS" id="23518">
    <property type="hits" value="15 hits in 1154 CRISPR screens"/>
</dbReference>
<dbReference type="CD-CODE" id="232F8A39">
    <property type="entry name" value="P-body"/>
</dbReference>
<dbReference type="CD-CODE" id="DEE660B4">
    <property type="entry name" value="Stress granule"/>
</dbReference>
<dbReference type="ChiTaRS" id="R3HDM1">
    <property type="organism name" value="human"/>
</dbReference>
<dbReference type="GenomeRNAi" id="23518"/>
<dbReference type="Pharos" id="Q15032">
    <property type="development level" value="Tdark"/>
</dbReference>
<dbReference type="PRO" id="PR:Q15032"/>
<dbReference type="Proteomes" id="UP000005640">
    <property type="component" value="Chromosome 2"/>
</dbReference>
<dbReference type="RNAct" id="Q15032">
    <property type="molecule type" value="protein"/>
</dbReference>
<dbReference type="Bgee" id="ENSG00000048991">
    <property type="expression patterns" value="Expressed in middle temporal gyrus and 219 other cell types or tissues"/>
</dbReference>
<dbReference type="ExpressionAtlas" id="Q15032">
    <property type="expression patterns" value="baseline and differential"/>
</dbReference>
<dbReference type="GO" id="GO:0003723">
    <property type="term" value="F:RNA binding"/>
    <property type="evidence" value="ECO:0007005"/>
    <property type="project" value="UniProtKB"/>
</dbReference>
<dbReference type="CDD" id="cd02642">
    <property type="entry name" value="R3H_encore_like"/>
    <property type="match status" value="1"/>
</dbReference>
<dbReference type="FunFam" id="3.30.1370.50:FF:000001">
    <property type="entry name" value="R3H domain-containing protein 2 isoform 1"/>
    <property type="match status" value="1"/>
</dbReference>
<dbReference type="Gene3D" id="3.30.1370.50">
    <property type="entry name" value="R3H-like domain"/>
    <property type="match status" value="1"/>
</dbReference>
<dbReference type="InterPro" id="IPR001374">
    <property type="entry name" value="R3H_dom"/>
</dbReference>
<dbReference type="InterPro" id="IPR036867">
    <property type="entry name" value="R3H_dom_sf"/>
</dbReference>
<dbReference type="InterPro" id="IPR051937">
    <property type="entry name" value="R3H_domain_containing"/>
</dbReference>
<dbReference type="InterPro" id="IPR024771">
    <property type="entry name" value="SUZ"/>
</dbReference>
<dbReference type="PANTHER" id="PTHR15672">
    <property type="entry name" value="CAMP-REGULATED PHOSPHOPROTEIN 21 RELATED R3H DOMAIN CONTAINING PROTEIN"/>
    <property type="match status" value="1"/>
</dbReference>
<dbReference type="PANTHER" id="PTHR15672:SF12">
    <property type="entry name" value="R3H DOMAIN-CONTAINING PROTEIN 1"/>
    <property type="match status" value="1"/>
</dbReference>
<dbReference type="Pfam" id="PF01424">
    <property type="entry name" value="R3H"/>
    <property type="match status" value="1"/>
</dbReference>
<dbReference type="Pfam" id="PF12752">
    <property type="entry name" value="SUZ"/>
    <property type="match status" value="1"/>
</dbReference>
<dbReference type="SMART" id="SM00393">
    <property type="entry name" value="R3H"/>
    <property type="match status" value="1"/>
</dbReference>
<dbReference type="SUPFAM" id="SSF82708">
    <property type="entry name" value="R3H domain"/>
    <property type="match status" value="1"/>
</dbReference>
<dbReference type="PROSITE" id="PS51061">
    <property type="entry name" value="R3H"/>
    <property type="match status" value="1"/>
</dbReference>
<dbReference type="PROSITE" id="PS51673">
    <property type="entry name" value="SUZ"/>
    <property type="match status" value="1"/>
</dbReference>
<protein>
    <recommendedName>
        <fullName>R3H domain-containing protein 1</fullName>
    </recommendedName>
</protein>
<sequence length="1099" mass="120696">MRMSDTVTVKDETATMKDLEAEVKDTTRVENLIKSENYGKILVEKNEHCIENNIDLQRPLQSFGQTGKRSKSSSKLKLVRSLAVCEESPPPPAPEISQENQEKIQIQLTQSFEKEEKPSKDEAEKEKASDKLPRKMLSRDSSQEYTDSTGIDLHEFLVNTLKNNPRDRMMLLKLEQEILDFIGNNESPRKKFPPMTSYHRMLLHRVAAYFGLDHNVDQSGKSVIVNKTSNTRIPDQKFNEHIKDDKGEDFQKRYILKRDNSSFDKDDNQMRIRLKDDRRSKSIEEREEEYQRARDRIFSQDSLCSQENYIIDKRLQDEDASSTQQRRQIFRVNKDASGRSTNSHQSSTENELKYSEPRPWSSTDSDSSLRNLKPAVTKASSFSGISVLTRGDSSGSSKSIGRLSKTGSESSGSVGSSTGSLSHIQQPLPGTALSQSSHGAPVVYPTVSTHSSLSFDGGLNGQVASPSTSFFLLPLEAAGIPPGSILINPQTGQPFINPDGSPVVYNPPMTQQPVRSQVPGPPQPPLPAPPQQPAANHIFSQDNLGSQFSHMSLARQPSADGSDPHAAMFQSTVVLQSPQQSGYIMTAAPPPHPPPPPPPPPPPPPLPPGQPVPTAGYPASGHPVSQPVLQQQGYIQQPSPQMPACYCAPGHYHSSQPQYRPVPSVHYNSHLNQPLPQPAQQTGYQVIPNQQQNYQGIVGVQQPQSQSLVSGQPNSIGNQIQGVVIPYTSVPTYQVSLPQGSQGIPHQTYQQPVMFPNQSNQGSMPTTGMPVYYSVIPPGQQNNLSSSVGYLQHPGSEQVQFPRTTSPCSSQQLQGHQCTAGPPPPPGGGMVMMQLSVPNNPQSCAHSPPQWKQNKYYCDHQRGQKCVEFSSVDNIVQHSPQLSSPIISPAQSPAPAQLSTLKTVRPSGPPLSIMPQFSRPFVPGQGDSRYPLLGQPLQYNPPAVLHGHIPNQQGQPGSRHGNRGRRQAKKAASTDLGAGETVVGKVLEITELPDGITRMEAEKLFGELFKIGAKIRWLRDPQSQPRRHPLCCGSGDNTANPERSKPSDLASTYTVLATFPSISAAQNALKKQINSVNKFKLRTSKKHYDFHILERASSQ</sequence>
<evidence type="ECO:0000255" key="1">
    <source>
        <dbReference type="PROSITE-ProRule" id="PRU00382"/>
    </source>
</evidence>
<evidence type="ECO:0000255" key="2">
    <source>
        <dbReference type="PROSITE-ProRule" id="PRU01009"/>
    </source>
</evidence>
<evidence type="ECO:0000256" key="3">
    <source>
        <dbReference type="SAM" id="MobiDB-lite"/>
    </source>
</evidence>
<evidence type="ECO:0000269" key="4">
    <source>
    </source>
</evidence>
<evidence type="ECO:0000269" key="5">
    <source>
    </source>
</evidence>
<evidence type="ECO:0000303" key="6">
    <source>
    </source>
</evidence>
<evidence type="ECO:0000303" key="7">
    <source>
    </source>
</evidence>
<evidence type="ECO:0000303" key="8">
    <source>
    </source>
</evidence>
<evidence type="ECO:0000305" key="9"/>
<evidence type="ECO:0007744" key="10">
    <source>
    </source>
</evidence>
<evidence type="ECO:0007744" key="11">
    <source>
    </source>
</evidence>
<evidence type="ECO:0007744" key="12">
    <source>
    </source>
</evidence>
<evidence type="ECO:0007744" key="13">
    <source>
    </source>
</evidence>
<evidence type="ECO:0007744" key="14">
    <source>
    </source>
</evidence>
<comment type="interaction">
    <interactant intactId="EBI-10966812">
        <id>Q15032-2</id>
    </interactant>
    <interactant intactId="EBI-930964">
        <id>P54253</id>
        <label>ATXN1</label>
    </interactant>
    <organismsDiffer>false</organismsDiffer>
    <experiments>3</experiments>
</comment>
<comment type="alternative products">
    <event type="alternative splicing"/>
    <isoform>
        <id>Q15032-1</id>
        <name>1</name>
        <sequence type="displayed"/>
    </isoform>
    <isoform>
        <id>Q15032-2</id>
        <name>2</name>
        <sequence type="described" ref="VSP_017344 VSP_017345 VSP_054310"/>
    </isoform>
    <isoform>
        <id>Q15032-3</id>
        <name>3</name>
        <sequence type="described" ref="VSP_054310"/>
    </isoform>
    <isoform>
        <id>Q15032-4</id>
        <name>4</name>
        <sequence type="described" ref="VSP_054308 VSP_054309 VSP_054310"/>
    </isoform>
</comment>
<comment type="sequence caution" evidence="9">
    <conflict type="erroneous initiation">
        <sequence resource="EMBL-CDS" id="BAA04878"/>
    </conflict>
    <text>Extended N-terminus.</text>
</comment>